<dbReference type="EC" id="5.4.99.27" evidence="1"/>
<dbReference type="EMBL" id="CP001657">
    <property type="protein sequence ID" value="ACT14367.1"/>
    <property type="molecule type" value="Genomic_DNA"/>
</dbReference>
<dbReference type="RefSeq" id="WP_015841497.1">
    <property type="nucleotide sequence ID" value="NC_012917.1"/>
</dbReference>
<dbReference type="SMR" id="C6DDG0"/>
<dbReference type="STRING" id="561230.PC1_3351"/>
<dbReference type="KEGG" id="pct:PC1_3351"/>
<dbReference type="eggNOG" id="COG0585">
    <property type="taxonomic scope" value="Bacteria"/>
</dbReference>
<dbReference type="HOGENOM" id="CLU_005281_4_0_6"/>
<dbReference type="OrthoDB" id="1550679at2"/>
<dbReference type="Proteomes" id="UP000002736">
    <property type="component" value="Chromosome"/>
</dbReference>
<dbReference type="GO" id="GO:0005829">
    <property type="term" value="C:cytosol"/>
    <property type="evidence" value="ECO:0007669"/>
    <property type="project" value="TreeGrafter"/>
</dbReference>
<dbReference type="GO" id="GO:0003723">
    <property type="term" value="F:RNA binding"/>
    <property type="evidence" value="ECO:0007669"/>
    <property type="project" value="InterPro"/>
</dbReference>
<dbReference type="GO" id="GO:0160150">
    <property type="term" value="F:tRNA pseudouridine(13) synthase activity"/>
    <property type="evidence" value="ECO:0007669"/>
    <property type="project" value="UniProtKB-EC"/>
</dbReference>
<dbReference type="GO" id="GO:0031119">
    <property type="term" value="P:tRNA pseudouridine synthesis"/>
    <property type="evidence" value="ECO:0007669"/>
    <property type="project" value="UniProtKB-UniRule"/>
</dbReference>
<dbReference type="CDD" id="cd02575">
    <property type="entry name" value="PseudoU_synth_EcTruD"/>
    <property type="match status" value="1"/>
</dbReference>
<dbReference type="FunFam" id="3.30.2350.20:FF:000001">
    <property type="entry name" value="tRNA pseudouridine synthase D"/>
    <property type="match status" value="1"/>
</dbReference>
<dbReference type="Gene3D" id="3.30.2350.20">
    <property type="entry name" value="TruD, catalytic domain"/>
    <property type="match status" value="1"/>
</dbReference>
<dbReference type="Gene3D" id="3.30.2340.10">
    <property type="entry name" value="TruD, insertion domain"/>
    <property type="match status" value="1"/>
</dbReference>
<dbReference type="HAMAP" id="MF_01082">
    <property type="entry name" value="TruD"/>
    <property type="match status" value="1"/>
</dbReference>
<dbReference type="InterPro" id="IPR020103">
    <property type="entry name" value="PsdUridine_synth_cat_dom_sf"/>
</dbReference>
<dbReference type="InterPro" id="IPR001656">
    <property type="entry name" value="PsdUridine_synth_TruD"/>
</dbReference>
<dbReference type="InterPro" id="IPR020119">
    <property type="entry name" value="PsdUridine_synth_TruD_CS"/>
</dbReference>
<dbReference type="InterPro" id="IPR011760">
    <property type="entry name" value="PsdUridine_synth_TruD_insert"/>
</dbReference>
<dbReference type="InterPro" id="IPR042214">
    <property type="entry name" value="TruD_catalytic"/>
</dbReference>
<dbReference type="InterPro" id="IPR043165">
    <property type="entry name" value="TruD_insert_sf"/>
</dbReference>
<dbReference type="InterPro" id="IPR050170">
    <property type="entry name" value="TruD_pseudoU_synthase"/>
</dbReference>
<dbReference type="NCBIfam" id="NF002155">
    <property type="entry name" value="PRK00984.1-4"/>
    <property type="match status" value="1"/>
</dbReference>
<dbReference type="NCBIfam" id="TIGR00094">
    <property type="entry name" value="tRNA_TruD_broad"/>
    <property type="match status" value="1"/>
</dbReference>
<dbReference type="PANTHER" id="PTHR47811">
    <property type="entry name" value="TRNA PSEUDOURIDINE SYNTHASE D"/>
    <property type="match status" value="1"/>
</dbReference>
<dbReference type="PANTHER" id="PTHR47811:SF1">
    <property type="entry name" value="TRNA PSEUDOURIDINE SYNTHASE D"/>
    <property type="match status" value="1"/>
</dbReference>
<dbReference type="Pfam" id="PF01142">
    <property type="entry name" value="TruD"/>
    <property type="match status" value="2"/>
</dbReference>
<dbReference type="SUPFAM" id="SSF55120">
    <property type="entry name" value="Pseudouridine synthase"/>
    <property type="match status" value="1"/>
</dbReference>
<dbReference type="PROSITE" id="PS50984">
    <property type="entry name" value="TRUD"/>
    <property type="match status" value="1"/>
</dbReference>
<dbReference type="PROSITE" id="PS01268">
    <property type="entry name" value="UPF0024"/>
    <property type="match status" value="1"/>
</dbReference>
<accession>C6DDG0</accession>
<evidence type="ECO:0000255" key="1">
    <source>
        <dbReference type="HAMAP-Rule" id="MF_01082"/>
    </source>
</evidence>
<sequence length="348" mass="39034">MENSEQLVWLHGEPQATGSLKSAAEDFVVVEDLGFQPDGDGEQVLVRVRKRGCNTQFVAEMLAKFARLPLRAVSYAGLKDRHAVTEQWFCLHMPGKDTPDFSTLALEGCDVLEVTRHRRKLRIGTLRGNHFTLVLRQVSDRREVDARLVLIAANGVPNYFGSQRFGRNGNNLEQARLWANNEIRVKERNKRSFYLSASRSAMFNQVVSARLAGEQAKTVLCGDALQLTGRGSWFVAKPDELETLQARLDAGELQITAPLPGDGELGTQDDARAFEELALTGQETLWSLVKRERVESARRAVLLYPQQMCWEWQDDTAVEVKFWLPAGSFATSVVRELLQSFQDADIGV</sequence>
<protein>
    <recommendedName>
        <fullName evidence="1">tRNA pseudouridine synthase D</fullName>
        <ecNumber evidence="1">5.4.99.27</ecNumber>
    </recommendedName>
    <alternativeName>
        <fullName evidence="1">tRNA pseudouridine(13) synthase</fullName>
    </alternativeName>
    <alternativeName>
        <fullName evidence="1">tRNA pseudouridylate synthase D</fullName>
    </alternativeName>
    <alternativeName>
        <fullName evidence="1">tRNA-uridine isomerase D</fullName>
    </alternativeName>
</protein>
<keyword id="KW-0413">Isomerase</keyword>
<keyword id="KW-0819">tRNA processing</keyword>
<proteinExistence type="inferred from homology"/>
<feature type="chain" id="PRO_1000213515" description="tRNA pseudouridine synthase D">
    <location>
        <begin position="1"/>
        <end position="348"/>
    </location>
</feature>
<feature type="domain" description="TRUD" evidence="1">
    <location>
        <begin position="155"/>
        <end position="303"/>
    </location>
</feature>
<feature type="active site" description="Nucleophile" evidence="1">
    <location>
        <position position="80"/>
    </location>
</feature>
<feature type="binding site" evidence="1">
    <location>
        <position position="27"/>
    </location>
    <ligand>
        <name>substrate</name>
    </ligand>
</feature>
<feature type="binding site" evidence="1">
    <location>
        <position position="129"/>
    </location>
    <ligand>
        <name>substrate</name>
    </ligand>
</feature>
<feature type="binding site" evidence="1">
    <location>
        <position position="329"/>
    </location>
    <ligand>
        <name>substrate</name>
    </ligand>
</feature>
<reference key="1">
    <citation type="submission" date="2009-07" db="EMBL/GenBank/DDBJ databases">
        <title>Complete sequence of Pectobacterium carotovorum subsp. carotovorum PC1.</title>
        <authorList>
            <consortium name="US DOE Joint Genome Institute"/>
            <person name="Lucas S."/>
            <person name="Copeland A."/>
            <person name="Lapidus A."/>
            <person name="Glavina del Rio T."/>
            <person name="Tice H."/>
            <person name="Bruce D."/>
            <person name="Goodwin L."/>
            <person name="Pitluck S."/>
            <person name="Munk A.C."/>
            <person name="Brettin T."/>
            <person name="Detter J.C."/>
            <person name="Han C."/>
            <person name="Tapia R."/>
            <person name="Larimer F."/>
            <person name="Land M."/>
            <person name="Hauser L."/>
            <person name="Kyrpides N."/>
            <person name="Mikhailova N."/>
            <person name="Balakrishnan V."/>
            <person name="Glasner J."/>
            <person name="Perna N.T."/>
        </authorList>
    </citation>
    <scope>NUCLEOTIDE SEQUENCE [LARGE SCALE GENOMIC DNA]</scope>
    <source>
        <strain>PC1</strain>
    </source>
</reference>
<comment type="function">
    <text evidence="1">Responsible for synthesis of pseudouridine from uracil-13 in transfer RNAs.</text>
</comment>
<comment type="catalytic activity">
    <reaction evidence="1">
        <text>uridine(13) in tRNA = pseudouridine(13) in tRNA</text>
        <dbReference type="Rhea" id="RHEA:42540"/>
        <dbReference type="Rhea" id="RHEA-COMP:10105"/>
        <dbReference type="Rhea" id="RHEA-COMP:10106"/>
        <dbReference type="ChEBI" id="CHEBI:65314"/>
        <dbReference type="ChEBI" id="CHEBI:65315"/>
        <dbReference type="EC" id="5.4.99.27"/>
    </reaction>
</comment>
<comment type="similarity">
    <text evidence="1">Belongs to the pseudouridine synthase TruD family.</text>
</comment>
<organism>
    <name type="scientific">Pectobacterium carotovorum subsp. carotovorum (strain PC1)</name>
    <dbReference type="NCBI Taxonomy" id="561230"/>
    <lineage>
        <taxon>Bacteria</taxon>
        <taxon>Pseudomonadati</taxon>
        <taxon>Pseudomonadota</taxon>
        <taxon>Gammaproteobacteria</taxon>
        <taxon>Enterobacterales</taxon>
        <taxon>Pectobacteriaceae</taxon>
        <taxon>Pectobacterium</taxon>
    </lineage>
</organism>
<name>TRUD_PECCP</name>
<gene>
    <name evidence="1" type="primary">truD</name>
    <name type="ordered locus">PC1_3351</name>
</gene>